<evidence type="ECO:0000250" key="1"/>
<evidence type="ECO:0000255" key="2"/>
<evidence type="ECO:0000255" key="3">
    <source>
        <dbReference type="PROSITE-ProRule" id="PRU10040"/>
    </source>
</evidence>
<evidence type="ECO:0000256" key="4">
    <source>
        <dbReference type="SAM" id="MobiDB-lite"/>
    </source>
</evidence>
<evidence type="ECO:0000269" key="5">
    <source>
    </source>
</evidence>
<evidence type="ECO:0000269" key="6">
    <source>
    </source>
</evidence>
<evidence type="ECO:0000305" key="7"/>
<proteinExistence type="evidence at transcript level"/>
<accession>Q84R10</accession>
<accession>Q9LZZ0</accession>
<gene>
    <name type="primary">PME36</name>
    <name type="synonym">ARATH36</name>
    <name type="ordered locus">At3g60730</name>
    <name type="ORF">T4C21.140</name>
</gene>
<name>PME36_ARATH</name>
<protein>
    <recommendedName>
        <fullName>Probable pectinesterase/pectinesterase inhibitor 36</fullName>
    </recommendedName>
    <domain>
        <recommendedName>
            <fullName>Pectinesterase inhibitor 36</fullName>
        </recommendedName>
        <alternativeName>
            <fullName>Pectin methylesterase inhibitor 36</fullName>
        </alternativeName>
    </domain>
    <domain>
        <recommendedName>
            <fullName>Pectinesterase 36</fullName>
            <shortName>PE 36</shortName>
            <ecNumber>3.1.1.11</ecNumber>
        </recommendedName>
        <alternativeName>
            <fullName>Pectin methylesterase 36</fullName>
            <shortName>AtPME36</shortName>
        </alternativeName>
    </domain>
</protein>
<feature type="signal peptide" evidence="2">
    <location>
        <begin position="1"/>
        <end position="25"/>
    </location>
</feature>
<feature type="chain" id="PRO_0000370181" description="Probable pectinesterase/pectinesterase inhibitor 36">
    <location>
        <begin position="26"/>
        <end position="519"/>
    </location>
</feature>
<feature type="region of interest" description="Pectinesterase inhibitor 36">
    <location>
        <begin position="27"/>
        <end position="141"/>
    </location>
</feature>
<feature type="region of interest" description="Disordered" evidence="4">
    <location>
        <begin position="147"/>
        <end position="196"/>
    </location>
</feature>
<feature type="region of interest" description="Pectinesterase 36">
    <location>
        <begin position="205"/>
        <end position="505"/>
    </location>
</feature>
<feature type="compositionally biased region" description="Basic residues" evidence="4">
    <location>
        <begin position="164"/>
        <end position="184"/>
    </location>
</feature>
<feature type="compositionally biased region" description="Polar residues" evidence="4">
    <location>
        <begin position="186"/>
        <end position="196"/>
    </location>
</feature>
<feature type="active site" description="Proton donor; for pectinesterase activity" evidence="3">
    <location>
        <position position="336"/>
    </location>
</feature>
<feature type="active site" description="Nucleophile; for pectinesterase activity" evidence="3">
    <location>
        <position position="357"/>
    </location>
</feature>
<feature type="binding site" evidence="1">
    <location>
        <position position="283"/>
    </location>
    <ligand>
        <name>substrate</name>
        <note>for pectinesterase activity</note>
    </ligand>
</feature>
<feature type="binding site" evidence="1">
    <location>
        <position position="313"/>
    </location>
    <ligand>
        <name>substrate</name>
        <note>for pectinesterase activity</note>
    </ligand>
</feature>
<feature type="binding site" evidence="1">
    <location>
        <position position="425"/>
    </location>
    <ligand>
        <name>substrate</name>
        <note>for pectinesterase activity</note>
    </ligand>
</feature>
<feature type="binding site" evidence="1">
    <location>
        <position position="427"/>
    </location>
    <ligand>
        <name>substrate</name>
        <note>for pectinesterase activity</note>
    </ligand>
</feature>
<feature type="site" description="Transition state stabilizer" evidence="1">
    <location>
        <position position="335"/>
    </location>
</feature>
<feature type="glycosylation site" description="N-linked (GlcNAc...) asparagine" evidence="2">
    <location>
        <position position="92"/>
    </location>
</feature>
<feature type="glycosylation site" description="N-linked (GlcNAc...) asparagine" evidence="2">
    <location>
        <position position="130"/>
    </location>
</feature>
<feature type="sequence conflict" description="In Ref. 3; AAP04164 and 4; BAF00482." evidence="7" ref="3 4">
    <original>C</original>
    <variation>R</variation>
    <location>
        <position position="350"/>
    </location>
</feature>
<reference key="1">
    <citation type="journal article" date="2000" name="Nature">
        <title>Sequence and analysis of chromosome 3 of the plant Arabidopsis thaliana.</title>
        <authorList>
            <person name="Salanoubat M."/>
            <person name="Lemcke K."/>
            <person name="Rieger M."/>
            <person name="Ansorge W."/>
            <person name="Unseld M."/>
            <person name="Fartmann B."/>
            <person name="Valle G."/>
            <person name="Bloecker H."/>
            <person name="Perez-Alonso M."/>
            <person name="Obermaier B."/>
            <person name="Delseny M."/>
            <person name="Boutry M."/>
            <person name="Grivell L.A."/>
            <person name="Mache R."/>
            <person name="Puigdomenech P."/>
            <person name="De Simone V."/>
            <person name="Choisne N."/>
            <person name="Artiguenave F."/>
            <person name="Robert C."/>
            <person name="Brottier P."/>
            <person name="Wincker P."/>
            <person name="Cattolico L."/>
            <person name="Weissenbach J."/>
            <person name="Saurin W."/>
            <person name="Quetier F."/>
            <person name="Schaefer M."/>
            <person name="Mueller-Auer S."/>
            <person name="Gabel C."/>
            <person name="Fuchs M."/>
            <person name="Benes V."/>
            <person name="Wurmbach E."/>
            <person name="Drzonek H."/>
            <person name="Erfle H."/>
            <person name="Jordan N."/>
            <person name="Bangert S."/>
            <person name="Wiedelmann R."/>
            <person name="Kranz H."/>
            <person name="Voss H."/>
            <person name="Holland R."/>
            <person name="Brandt P."/>
            <person name="Nyakatura G."/>
            <person name="Vezzi A."/>
            <person name="D'Angelo M."/>
            <person name="Pallavicini A."/>
            <person name="Toppo S."/>
            <person name="Simionati B."/>
            <person name="Conrad A."/>
            <person name="Hornischer K."/>
            <person name="Kauer G."/>
            <person name="Loehnert T.-H."/>
            <person name="Nordsiek G."/>
            <person name="Reichelt J."/>
            <person name="Scharfe M."/>
            <person name="Schoen O."/>
            <person name="Bargues M."/>
            <person name="Terol J."/>
            <person name="Climent J."/>
            <person name="Navarro P."/>
            <person name="Collado C."/>
            <person name="Perez-Perez A."/>
            <person name="Ottenwaelder B."/>
            <person name="Duchemin D."/>
            <person name="Cooke R."/>
            <person name="Laudie M."/>
            <person name="Berger-Llauro C."/>
            <person name="Purnelle B."/>
            <person name="Masuy D."/>
            <person name="de Haan M."/>
            <person name="Maarse A.C."/>
            <person name="Alcaraz J.-P."/>
            <person name="Cottet A."/>
            <person name="Casacuberta E."/>
            <person name="Monfort A."/>
            <person name="Argiriou A."/>
            <person name="Flores M."/>
            <person name="Liguori R."/>
            <person name="Vitale D."/>
            <person name="Mannhaupt G."/>
            <person name="Haase D."/>
            <person name="Schoof H."/>
            <person name="Rudd S."/>
            <person name="Zaccaria P."/>
            <person name="Mewes H.-W."/>
            <person name="Mayer K.F.X."/>
            <person name="Kaul S."/>
            <person name="Town C.D."/>
            <person name="Koo H.L."/>
            <person name="Tallon L.J."/>
            <person name="Jenkins J."/>
            <person name="Rooney T."/>
            <person name="Rizzo M."/>
            <person name="Walts A."/>
            <person name="Utterback T."/>
            <person name="Fujii C.Y."/>
            <person name="Shea T.P."/>
            <person name="Creasy T.H."/>
            <person name="Haas B."/>
            <person name="Maiti R."/>
            <person name="Wu D."/>
            <person name="Peterson J."/>
            <person name="Van Aken S."/>
            <person name="Pai G."/>
            <person name="Militscher J."/>
            <person name="Sellers P."/>
            <person name="Gill J.E."/>
            <person name="Feldblyum T.V."/>
            <person name="Preuss D."/>
            <person name="Lin X."/>
            <person name="Nierman W.C."/>
            <person name="Salzberg S.L."/>
            <person name="White O."/>
            <person name="Venter J.C."/>
            <person name="Fraser C.M."/>
            <person name="Kaneko T."/>
            <person name="Nakamura Y."/>
            <person name="Sato S."/>
            <person name="Kato T."/>
            <person name="Asamizu E."/>
            <person name="Sasamoto S."/>
            <person name="Kimura T."/>
            <person name="Idesawa K."/>
            <person name="Kawashima K."/>
            <person name="Kishida Y."/>
            <person name="Kiyokawa C."/>
            <person name="Kohara M."/>
            <person name="Matsumoto M."/>
            <person name="Matsuno A."/>
            <person name="Muraki A."/>
            <person name="Nakayama S."/>
            <person name="Nakazaki N."/>
            <person name="Shinpo S."/>
            <person name="Takeuchi C."/>
            <person name="Wada T."/>
            <person name="Watanabe A."/>
            <person name="Yamada M."/>
            <person name="Yasuda M."/>
            <person name="Tabata S."/>
        </authorList>
    </citation>
    <scope>NUCLEOTIDE SEQUENCE [LARGE SCALE GENOMIC DNA]</scope>
    <source>
        <strain>cv. Columbia</strain>
    </source>
</reference>
<reference key="2">
    <citation type="journal article" date="2017" name="Plant J.">
        <title>Araport11: a complete reannotation of the Arabidopsis thaliana reference genome.</title>
        <authorList>
            <person name="Cheng C.Y."/>
            <person name="Krishnakumar V."/>
            <person name="Chan A.P."/>
            <person name="Thibaud-Nissen F."/>
            <person name="Schobel S."/>
            <person name="Town C.D."/>
        </authorList>
    </citation>
    <scope>GENOME REANNOTATION</scope>
    <source>
        <strain>cv. Columbia</strain>
    </source>
</reference>
<reference key="3">
    <citation type="journal article" date="2003" name="Science">
        <title>Empirical analysis of transcriptional activity in the Arabidopsis genome.</title>
        <authorList>
            <person name="Yamada K."/>
            <person name="Lim J."/>
            <person name="Dale J.M."/>
            <person name="Chen H."/>
            <person name="Shinn P."/>
            <person name="Palm C.J."/>
            <person name="Southwick A.M."/>
            <person name="Wu H.C."/>
            <person name="Kim C.J."/>
            <person name="Nguyen M."/>
            <person name="Pham P.K."/>
            <person name="Cheuk R.F."/>
            <person name="Karlin-Newmann G."/>
            <person name="Liu S.X."/>
            <person name="Lam B."/>
            <person name="Sakano H."/>
            <person name="Wu T."/>
            <person name="Yu G."/>
            <person name="Miranda M."/>
            <person name="Quach H.L."/>
            <person name="Tripp M."/>
            <person name="Chang C.H."/>
            <person name="Lee J.M."/>
            <person name="Toriumi M.J."/>
            <person name="Chan M.M."/>
            <person name="Tang C.C."/>
            <person name="Onodera C.S."/>
            <person name="Deng J.M."/>
            <person name="Akiyama K."/>
            <person name="Ansari Y."/>
            <person name="Arakawa T."/>
            <person name="Banh J."/>
            <person name="Banno F."/>
            <person name="Bowser L."/>
            <person name="Brooks S.Y."/>
            <person name="Carninci P."/>
            <person name="Chao Q."/>
            <person name="Choy N."/>
            <person name="Enju A."/>
            <person name="Goldsmith A.D."/>
            <person name="Gurjal M."/>
            <person name="Hansen N.F."/>
            <person name="Hayashizaki Y."/>
            <person name="Johnson-Hopson C."/>
            <person name="Hsuan V.W."/>
            <person name="Iida K."/>
            <person name="Karnes M."/>
            <person name="Khan S."/>
            <person name="Koesema E."/>
            <person name="Ishida J."/>
            <person name="Jiang P.X."/>
            <person name="Jones T."/>
            <person name="Kawai J."/>
            <person name="Kamiya A."/>
            <person name="Meyers C."/>
            <person name="Nakajima M."/>
            <person name="Narusaka M."/>
            <person name="Seki M."/>
            <person name="Sakurai T."/>
            <person name="Satou M."/>
            <person name="Tamse R."/>
            <person name="Vaysberg M."/>
            <person name="Wallender E.K."/>
            <person name="Wong C."/>
            <person name="Yamamura Y."/>
            <person name="Yuan S."/>
            <person name="Shinozaki K."/>
            <person name="Davis R.W."/>
            <person name="Theologis A."/>
            <person name="Ecker J.R."/>
        </authorList>
    </citation>
    <scope>NUCLEOTIDE SEQUENCE [LARGE SCALE MRNA]</scope>
    <source>
        <strain>cv. Columbia</strain>
    </source>
</reference>
<reference key="4">
    <citation type="submission" date="2006-07" db="EMBL/GenBank/DDBJ databases">
        <title>Large-scale analysis of RIKEN Arabidopsis full-length (RAFL) cDNAs.</title>
        <authorList>
            <person name="Totoki Y."/>
            <person name="Seki M."/>
            <person name="Ishida J."/>
            <person name="Nakajima M."/>
            <person name="Enju A."/>
            <person name="Kamiya A."/>
            <person name="Narusaka M."/>
            <person name="Shin-i T."/>
            <person name="Nakagawa M."/>
            <person name="Sakamoto N."/>
            <person name="Oishi K."/>
            <person name="Kohara Y."/>
            <person name="Kobayashi M."/>
            <person name="Toyoda A."/>
            <person name="Sakaki Y."/>
            <person name="Sakurai T."/>
            <person name="Iida K."/>
            <person name="Akiyama K."/>
            <person name="Satou M."/>
            <person name="Toyoda T."/>
            <person name="Konagaya A."/>
            <person name="Carninci P."/>
            <person name="Kawai J."/>
            <person name="Hayashizaki Y."/>
            <person name="Shinozaki K."/>
        </authorList>
    </citation>
    <scope>NUCLEOTIDE SEQUENCE [LARGE SCALE MRNA]</scope>
    <source>
        <strain>cv. Columbia</strain>
    </source>
</reference>
<reference key="5">
    <citation type="journal article" date="2004" name="Carbohydr. Res.">
        <title>Pectin methylesterases: sequence-structural features and phylogenetic relationships.</title>
        <authorList>
            <person name="Markovic O."/>
            <person name="Janecek S."/>
        </authorList>
    </citation>
    <scope>GENE FAMILY</scope>
    <scope>NOMENCLATURE</scope>
</reference>
<reference key="6">
    <citation type="journal article" date="2006" name="Planta">
        <title>Comprehensive expression profiling of the pectin methylesterase gene family during silique development in Arabidopsis thaliana.</title>
        <authorList>
            <person name="Louvet R."/>
            <person name="Cavel E."/>
            <person name="Gutierrez L."/>
            <person name="Guenin S."/>
            <person name="Roger D."/>
            <person name="Gillet F."/>
            <person name="Guerineau F."/>
            <person name="Pelloux J."/>
        </authorList>
    </citation>
    <scope>TISSUE SPECIFICITY</scope>
    <scope>DEVELOPMENTAL STAGE</scope>
</reference>
<reference key="7">
    <citation type="journal article" date="2006" name="BMC Genomics">
        <title>Computational and experimental analysis identifies Arabidopsis genes specifically expressed during early seed development.</title>
        <authorList>
            <person name="Becerra C."/>
            <person name="Puigdomenech P."/>
            <person name="Vicient C.M."/>
        </authorList>
    </citation>
    <scope>DEVELOPMENTAL STAGE</scope>
</reference>
<organism>
    <name type="scientific">Arabidopsis thaliana</name>
    <name type="common">Mouse-ear cress</name>
    <dbReference type="NCBI Taxonomy" id="3702"/>
    <lineage>
        <taxon>Eukaryota</taxon>
        <taxon>Viridiplantae</taxon>
        <taxon>Streptophyta</taxon>
        <taxon>Embryophyta</taxon>
        <taxon>Tracheophyta</taxon>
        <taxon>Spermatophyta</taxon>
        <taxon>Magnoliopsida</taxon>
        <taxon>eudicotyledons</taxon>
        <taxon>Gunneridae</taxon>
        <taxon>Pentapetalae</taxon>
        <taxon>rosids</taxon>
        <taxon>malvids</taxon>
        <taxon>Brassicales</taxon>
        <taxon>Brassicaceae</taxon>
        <taxon>Camelineae</taxon>
        <taxon>Arabidopsis</taxon>
    </lineage>
</organism>
<keyword id="KW-0063">Aspartyl esterase</keyword>
<keyword id="KW-0134">Cell wall</keyword>
<keyword id="KW-0961">Cell wall biogenesis/degradation</keyword>
<keyword id="KW-0325">Glycoprotein</keyword>
<keyword id="KW-0378">Hydrolase</keyword>
<keyword id="KW-1185">Reference proteome</keyword>
<keyword id="KW-0964">Secreted</keyword>
<keyword id="KW-0732">Signal</keyword>
<sequence length="519" mass="57877">MSTFVKVTDLITIMFFLAIAAVITASNTAELDVLEMARTAVVEAKTSFGSMAVTEATSEVAGSYYKLGLSECEKLYDESEARLSKLVVDHENFTVEDVRTWLSGVLANHHTCLDGLIQQRQGHKPLVHSNVTFVLHEALAFYKKSRGHMKKRLHGPARQGHGPTRPKHRPTRPNHGPGRSHHGPSRPNQNGGMLVSWNPTSSRADFVVARDGSATHRTINQALAAVSRMGKSRLNRVIIYIKAGVYNEKIEIDRHMKNIMLVGDGMDRTIVTNNRNVPDGSTTYGSATFGVSGDGFWARDITFENTAGPHKHQAVALRVSSDLSLFYRCSFKGYQDTLFTHSLRQFYRDCHIYGTIDFIFGDAAAVFQNCDIFVRRPMDHQGNMITAQGRDDPHTNSGISIQHSRIRAAPEFEAVKGRFKSYLGRPWKKYSRTVFLKTDIDELIDPRGWREWSGSYALSTLYYGEFMNTGAGAGTGRRVNWPGFHVLRGEEEASPFTVSRFIQGDSWIPITGVPFSAGV</sequence>
<dbReference type="EC" id="3.1.1.11"/>
<dbReference type="EMBL" id="AL162295">
    <property type="protein sequence ID" value="CAB82677.1"/>
    <property type="status" value="ALT_SEQ"/>
    <property type="molecule type" value="Genomic_DNA"/>
</dbReference>
<dbReference type="EMBL" id="CP002686">
    <property type="protein sequence ID" value="AEE80101.1"/>
    <property type="molecule type" value="Genomic_DNA"/>
</dbReference>
<dbReference type="EMBL" id="BT006181">
    <property type="protein sequence ID" value="AAP04164.1"/>
    <property type="molecule type" value="mRNA"/>
</dbReference>
<dbReference type="EMBL" id="AK228563">
    <property type="protein sequence ID" value="BAF00482.1"/>
    <property type="molecule type" value="mRNA"/>
</dbReference>
<dbReference type="PIR" id="T47884">
    <property type="entry name" value="T47884"/>
</dbReference>
<dbReference type="RefSeq" id="NP_191632.2">
    <property type="nucleotide sequence ID" value="NM_115937.2"/>
</dbReference>
<dbReference type="SMR" id="Q84R10"/>
<dbReference type="FunCoup" id="Q84R10">
    <property type="interactions" value="152"/>
</dbReference>
<dbReference type="STRING" id="3702.Q84R10"/>
<dbReference type="GlyCosmos" id="Q84R10">
    <property type="glycosylation" value="2 sites, No reported glycans"/>
</dbReference>
<dbReference type="GlyGen" id="Q84R10">
    <property type="glycosylation" value="2 sites"/>
</dbReference>
<dbReference type="iPTMnet" id="Q84R10"/>
<dbReference type="PaxDb" id="3702-AT3G60730.1"/>
<dbReference type="ProteomicsDB" id="234780"/>
<dbReference type="EnsemblPlants" id="AT3G60730.1">
    <property type="protein sequence ID" value="AT3G60730.1"/>
    <property type="gene ID" value="AT3G60730"/>
</dbReference>
<dbReference type="GeneID" id="825244"/>
<dbReference type="Gramene" id="AT3G60730.1">
    <property type="protein sequence ID" value="AT3G60730.1"/>
    <property type="gene ID" value="AT3G60730"/>
</dbReference>
<dbReference type="KEGG" id="ath:AT3G60730"/>
<dbReference type="Araport" id="AT3G60730"/>
<dbReference type="TAIR" id="AT3G60730"/>
<dbReference type="eggNOG" id="ENOG502QSUJ">
    <property type="taxonomic scope" value="Eukaryota"/>
</dbReference>
<dbReference type="HOGENOM" id="CLU_012243_9_1_1"/>
<dbReference type="InParanoid" id="Q84R10"/>
<dbReference type="OMA" id="MLVSWNP"/>
<dbReference type="OrthoDB" id="2019149at2759"/>
<dbReference type="BioCyc" id="ARA:AT3G60730-MONOMER"/>
<dbReference type="UniPathway" id="UPA00545">
    <property type="reaction ID" value="UER00823"/>
</dbReference>
<dbReference type="PRO" id="PR:Q84R10"/>
<dbReference type="Proteomes" id="UP000006548">
    <property type="component" value="Chromosome 3"/>
</dbReference>
<dbReference type="ExpressionAtlas" id="Q84R10">
    <property type="expression patterns" value="baseline and differential"/>
</dbReference>
<dbReference type="GO" id="GO:0005576">
    <property type="term" value="C:extracellular region"/>
    <property type="evidence" value="ECO:0007669"/>
    <property type="project" value="UniProtKB-KW"/>
</dbReference>
<dbReference type="GO" id="GO:0004857">
    <property type="term" value="F:enzyme inhibitor activity"/>
    <property type="evidence" value="ECO:0007669"/>
    <property type="project" value="InterPro"/>
</dbReference>
<dbReference type="GO" id="GO:0030599">
    <property type="term" value="F:pectinesterase activity"/>
    <property type="evidence" value="ECO:0007669"/>
    <property type="project" value="UniProtKB-EC"/>
</dbReference>
<dbReference type="GO" id="GO:0042545">
    <property type="term" value="P:cell wall modification"/>
    <property type="evidence" value="ECO:0007669"/>
    <property type="project" value="InterPro"/>
</dbReference>
<dbReference type="GO" id="GO:0045490">
    <property type="term" value="P:pectin catabolic process"/>
    <property type="evidence" value="ECO:0007669"/>
    <property type="project" value="UniProtKB-UniPathway"/>
</dbReference>
<dbReference type="CDD" id="cd15799">
    <property type="entry name" value="PMEI-like_4"/>
    <property type="match status" value="1"/>
</dbReference>
<dbReference type="FunFam" id="1.20.140.40:FF:000036">
    <property type="entry name" value="Pectinesterase"/>
    <property type="match status" value="1"/>
</dbReference>
<dbReference type="FunFam" id="2.160.20.10:FF:000001">
    <property type="entry name" value="Pectinesterase"/>
    <property type="match status" value="1"/>
</dbReference>
<dbReference type="Gene3D" id="1.20.140.40">
    <property type="entry name" value="Invertase/pectin methylesterase inhibitor family protein"/>
    <property type="match status" value="1"/>
</dbReference>
<dbReference type="Gene3D" id="2.160.20.10">
    <property type="entry name" value="Single-stranded right-handed beta-helix, Pectin lyase-like"/>
    <property type="match status" value="1"/>
</dbReference>
<dbReference type="InterPro" id="IPR035513">
    <property type="entry name" value="Invertase/methylesterase_inhib"/>
</dbReference>
<dbReference type="InterPro" id="IPR012334">
    <property type="entry name" value="Pectin_lyas_fold"/>
</dbReference>
<dbReference type="InterPro" id="IPR011050">
    <property type="entry name" value="Pectin_lyase_fold/virulence"/>
</dbReference>
<dbReference type="InterPro" id="IPR033131">
    <property type="entry name" value="Pectinesterase_Asp_AS"/>
</dbReference>
<dbReference type="InterPro" id="IPR000070">
    <property type="entry name" value="Pectinesterase_cat"/>
</dbReference>
<dbReference type="InterPro" id="IPR006501">
    <property type="entry name" value="Pectinesterase_inhib_dom"/>
</dbReference>
<dbReference type="PANTHER" id="PTHR31707">
    <property type="entry name" value="PECTINESTERASE"/>
    <property type="match status" value="1"/>
</dbReference>
<dbReference type="Pfam" id="PF01095">
    <property type="entry name" value="Pectinesterase"/>
    <property type="match status" value="1"/>
</dbReference>
<dbReference type="Pfam" id="PF04043">
    <property type="entry name" value="PMEI"/>
    <property type="match status" value="1"/>
</dbReference>
<dbReference type="SMART" id="SM00856">
    <property type="entry name" value="PMEI"/>
    <property type="match status" value="1"/>
</dbReference>
<dbReference type="SUPFAM" id="SSF51126">
    <property type="entry name" value="Pectin lyase-like"/>
    <property type="match status" value="1"/>
</dbReference>
<dbReference type="SUPFAM" id="SSF101148">
    <property type="entry name" value="Plant invertase/pectin methylesterase inhibitor"/>
    <property type="match status" value="1"/>
</dbReference>
<dbReference type="PROSITE" id="PS00503">
    <property type="entry name" value="PECTINESTERASE_2"/>
    <property type="match status" value="1"/>
</dbReference>
<comment type="function">
    <text evidence="1">Acts in the modification of cell walls via demethylesterification of cell wall pectin.</text>
</comment>
<comment type="catalytic activity">
    <reaction>
        <text>[(1-&gt;4)-alpha-D-galacturonosyl methyl ester](n) + n H2O = [(1-&gt;4)-alpha-D-galacturonosyl](n) + n methanol + n H(+)</text>
        <dbReference type="Rhea" id="RHEA:22380"/>
        <dbReference type="Rhea" id="RHEA-COMP:14570"/>
        <dbReference type="Rhea" id="RHEA-COMP:14573"/>
        <dbReference type="ChEBI" id="CHEBI:15377"/>
        <dbReference type="ChEBI" id="CHEBI:15378"/>
        <dbReference type="ChEBI" id="CHEBI:17790"/>
        <dbReference type="ChEBI" id="CHEBI:140522"/>
        <dbReference type="ChEBI" id="CHEBI:140523"/>
        <dbReference type="EC" id="3.1.1.11"/>
    </reaction>
</comment>
<comment type="pathway">
    <text>Glycan metabolism; pectin degradation; 2-dehydro-3-deoxy-D-gluconate from pectin: step 1/5.</text>
</comment>
<comment type="subcellular location">
    <subcellularLocation>
        <location evidence="1">Secreted</location>
        <location evidence="1">Cell wall</location>
    </subcellularLocation>
</comment>
<comment type="tissue specificity">
    <text evidence="6">Expressed in siliques.</text>
</comment>
<comment type="developmental stage">
    <text evidence="5 6">Expressed during early seed development and late developmental phases of siliques.</text>
</comment>
<comment type="miscellaneous">
    <text>The PMEI region may act as an autoinhibitory domain and prevent untimely PME activity during transport.</text>
</comment>
<comment type="similarity">
    <text evidence="7">In the N-terminal section; belongs to the PMEI family.</text>
</comment>
<comment type="similarity">
    <text evidence="7">In the C-terminal section; belongs to the pectinesterase family.</text>
</comment>
<comment type="sequence caution" evidence="7">
    <conflict type="erroneous gene model prediction">
        <sequence resource="EMBL-CDS" id="CAB82677"/>
    </conflict>
</comment>